<evidence type="ECO:0000255" key="1">
    <source>
        <dbReference type="HAMAP-Rule" id="MF_00633"/>
    </source>
</evidence>
<keyword id="KW-0150">Chloroplast</keyword>
<keyword id="KW-0249">Electron transport</keyword>
<keyword id="KW-0349">Heme</keyword>
<keyword id="KW-0408">Iron</keyword>
<keyword id="KW-0472">Membrane</keyword>
<keyword id="KW-0479">Metal-binding</keyword>
<keyword id="KW-0602">Photosynthesis</keyword>
<keyword id="KW-0934">Plastid</keyword>
<keyword id="KW-0793">Thylakoid</keyword>
<keyword id="KW-0812">Transmembrane</keyword>
<keyword id="KW-1133">Transmembrane helix</keyword>
<keyword id="KW-0813">Transport</keyword>
<sequence length="219" mass="24373">MGFIYDWSEERLEIQSIADDILSKFVPSHVNIFYCFGGIVLTAFIFQGASGFALTIYYRPTVVEAFSSIQLILYHVNLGWFIRSIHRWSSGCMVLVLILHISRVYLTGGFKKPRELTWISGVILAVVTVSFGVTGYSLPWDQIGYWACKIVTAVPEALDDLLPGAGKLLVLTLRGGFSVGQTTLTRLYSIHTFVLPLVTLVLLIVHFSLLRKQGISGPL</sequence>
<feature type="chain" id="PRO_0000061796" description="Cytochrome b6">
    <location>
        <begin position="1"/>
        <end position="219"/>
    </location>
</feature>
<feature type="transmembrane region" description="Helical" evidence="1">
    <location>
        <begin position="32"/>
        <end position="52"/>
    </location>
</feature>
<feature type="transmembrane region" description="Helical" evidence="1">
    <location>
        <begin position="90"/>
        <end position="110"/>
    </location>
</feature>
<feature type="transmembrane region" description="Helical" evidence="1">
    <location>
        <begin position="116"/>
        <end position="136"/>
    </location>
</feature>
<feature type="transmembrane region" description="Helical" evidence="1">
    <location>
        <begin position="190"/>
        <end position="210"/>
    </location>
</feature>
<feature type="binding site" description="covalent" evidence="1">
    <location>
        <position position="35"/>
    </location>
    <ligand>
        <name>heme c</name>
        <dbReference type="ChEBI" id="CHEBI:61717"/>
    </ligand>
</feature>
<feature type="binding site" description="axial binding residue" evidence="1">
    <location>
        <position position="86"/>
    </location>
    <ligand>
        <name>heme b</name>
        <dbReference type="ChEBI" id="CHEBI:60344"/>
        <label>2</label>
    </ligand>
    <ligandPart>
        <name>Fe</name>
        <dbReference type="ChEBI" id="CHEBI:18248"/>
    </ligandPart>
</feature>
<feature type="binding site" description="axial binding residue" evidence="1">
    <location>
        <position position="100"/>
    </location>
    <ligand>
        <name>heme b</name>
        <dbReference type="ChEBI" id="CHEBI:60344"/>
        <label>1</label>
    </ligand>
    <ligandPart>
        <name>Fe</name>
        <dbReference type="ChEBI" id="CHEBI:18248"/>
    </ligandPart>
</feature>
<feature type="binding site" description="axial binding residue" evidence="1">
    <location>
        <position position="191"/>
    </location>
    <ligand>
        <name>heme b</name>
        <dbReference type="ChEBI" id="CHEBI:60344"/>
        <label>2</label>
    </ligand>
    <ligandPart>
        <name>Fe</name>
        <dbReference type="ChEBI" id="CHEBI:18248"/>
    </ligandPart>
</feature>
<feature type="binding site" description="axial binding residue" evidence="1">
    <location>
        <position position="206"/>
    </location>
    <ligand>
        <name>heme b</name>
        <dbReference type="ChEBI" id="CHEBI:60344"/>
        <label>1</label>
    </ligand>
    <ligandPart>
        <name>Fe</name>
        <dbReference type="ChEBI" id="CHEBI:18248"/>
    </ligandPart>
</feature>
<protein>
    <recommendedName>
        <fullName evidence="1">Cytochrome b6</fullName>
    </recommendedName>
</protein>
<proteinExistence type="inferred from homology"/>
<accession>Q9XQU7</accession>
<organism>
    <name type="scientific">Heterocapsa triquetra</name>
    <name type="common">Dinoflagellate</name>
    <name type="synonym">Glenodinium triquetrum</name>
    <dbReference type="NCBI Taxonomy" id="66468"/>
    <lineage>
        <taxon>Eukaryota</taxon>
        <taxon>Sar</taxon>
        <taxon>Alveolata</taxon>
        <taxon>Dinophyceae</taxon>
        <taxon>Peridiniales</taxon>
        <taxon>Heterocapsaceae</taxon>
        <taxon>Heterocapsa</taxon>
    </lineage>
</organism>
<name>CYB6_HETTR</name>
<geneLocation type="chloroplast"/>
<comment type="function">
    <text evidence="1">Component of the cytochrome b6-f complex, which mediates electron transfer between photosystem II (PSII) and photosystem I (PSI), cyclic electron flow around PSI, and state transitions.</text>
</comment>
<comment type="cofactor">
    <cofactor evidence="1">
        <name>heme b</name>
        <dbReference type="ChEBI" id="CHEBI:60344"/>
    </cofactor>
    <text evidence="1">Binds 2 heme b groups non-covalently with two histidine residues as axial ligands.</text>
</comment>
<comment type="cofactor">
    <cofactor evidence="1">
        <name>heme c</name>
        <dbReference type="ChEBI" id="CHEBI:61717"/>
    </cofactor>
    <text evidence="1">Binds one heme group covalently by a single cysteine link with no axial amino acid ligand. This heme was named heme ci.</text>
</comment>
<comment type="subunit">
    <text evidence="1">The 4 large subunits of the cytochrome b6-f complex are cytochrome b6, subunit IV (17 kDa polypeptide, PetD), cytochrome f and the Rieske protein, while the 4 small subunits are PetG, PetL, PetM and PetN. The complex functions as a dimer.</text>
</comment>
<comment type="subcellular location">
    <subcellularLocation>
        <location evidence="1">Plastid</location>
        <location evidence="1">Chloroplast thylakoid membrane</location>
        <topology evidence="1">Multi-pass membrane protein</topology>
    </subcellularLocation>
</comment>
<comment type="miscellaneous">
    <text evidence="1">Heme 1 (or BH or b566) is high-potential and absorbs at about 566 nm, and heme 2 (or BL or b562) is low-potential and absorbs at about 562 nm.</text>
</comment>
<comment type="similarity">
    <text evidence="1">Belongs to the cytochrome b family. PetB subfamily.</text>
</comment>
<dbReference type="EMBL" id="AF130037">
    <property type="protein sequence ID" value="AAD44704.1"/>
    <property type="molecule type" value="Genomic_DNA"/>
</dbReference>
<dbReference type="SMR" id="Q9XQU7"/>
<dbReference type="GO" id="GO:0009535">
    <property type="term" value="C:chloroplast thylakoid membrane"/>
    <property type="evidence" value="ECO:0007669"/>
    <property type="project" value="UniProtKB-SubCell"/>
</dbReference>
<dbReference type="GO" id="GO:0045158">
    <property type="term" value="F:electron transporter, transferring electrons within cytochrome b6/f complex of photosystem II activity"/>
    <property type="evidence" value="ECO:0007669"/>
    <property type="project" value="UniProtKB-UniRule"/>
</dbReference>
<dbReference type="GO" id="GO:0046872">
    <property type="term" value="F:metal ion binding"/>
    <property type="evidence" value="ECO:0007669"/>
    <property type="project" value="UniProtKB-KW"/>
</dbReference>
<dbReference type="GO" id="GO:0016491">
    <property type="term" value="F:oxidoreductase activity"/>
    <property type="evidence" value="ECO:0007669"/>
    <property type="project" value="InterPro"/>
</dbReference>
<dbReference type="GO" id="GO:0015979">
    <property type="term" value="P:photosynthesis"/>
    <property type="evidence" value="ECO:0007669"/>
    <property type="project" value="UniProtKB-UniRule"/>
</dbReference>
<dbReference type="GO" id="GO:0022904">
    <property type="term" value="P:respiratory electron transport chain"/>
    <property type="evidence" value="ECO:0007669"/>
    <property type="project" value="InterPro"/>
</dbReference>
<dbReference type="CDD" id="cd00284">
    <property type="entry name" value="Cytochrome_b_N"/>
    <property type="match status" value="1"/>
</dbReference>
<dbReference type="Gene3D" id="1.20.810.10">
    <property type="entry name" value="Cytochrome Bc1 Complex, Chain C"/>
    <property type="match status" value="1"/>
</dbReference>
<dbReference type="HAMAP" id="MF_00633">
    <property type="entry name" value="Cytb6_f_cytb6"/>
    <property type="match status" value="1"/>
</dbReference>
<dbReference type="InterPro" id="IPR005797">
    <property type="entry name" value="Cyt_b/b6_N"/>
</dbReference>
<dbReference type="InterPro" id="IPR023530">
    <property type="entry name" value="Cyt_B6_PetB"/>
</dbReference>
<dbReference type="InterPro" id="IPR027387">
    <property type="entry name" value="Cytb/b6-like_sf"/>
</dbReference>
<dbReference type="InterPro" id="IPR048259">
    <property type="entry name" value="Cytochrome_b_N_euk/bac"/>
</dbReference>
<dbReference type="InterPro" id="IPR016174">
    <property type="entry name" value="Di-haem_cyt_TM"/>
</dbReference>
<dbReference type="PANTHER" id="PTHR19271">
    <property type="entry name" value="CYTOCHROME B"/>
    <property type="match status" value="1"/>
</dbReference>
<dbReference type="PANTHER" id="PTHR19271:SF16">
    <property type="entry name" value="CYTOCHROME B"/>
    <property type="match status" value="1"/>
</dbReference>
<dbReference type="Pfam" id="PF00033">
    <property type="entry name" value="Cytochrome_B"/>
    <property type="match status" value="1"/>
</dbReference>
<dbReference type="PIRSF" id="PIRSF000032">
    <property type="entry name" value="Cytochrome_b6"/>
    <property type="match status" value="1"/>
</dbReference>
<dbReference type="SUPFAM" id="SSF81342">
    <property type="entry name" value="Transmembrane di-heme cytochromes"/>
    <property type="match status" value="1"/>
</dbReference>
<dbReference type="PROSITE" id="PS51002">
    <property type="entry name" value="CYTB_NTER"/>
    <property type="match status" value="1"/>
</dbReference>
<gene>
    <name evidence="1" type="primary">petB</name>
    <name evidence="1" type="synonym">cytB</name>
</gene>
<reference key="1">
    <citation type="journal article" date="1999" name="Nature">
        <title>Single gene circles in dinoflagellate chloroplast genomes.</title>
        <authorList>
            <person name="Zhang Z."/>
            <person name="Green B.R."/>
            <person name="Cavalier-Smith T."/>
        </authorList>
    </citation>
    <scope>NUCLEOTIDE SEQUENCE [GENOMIC DNA]</scope>
    <source>
        <strain>CCMP449</strain>
    </source>
</reference>